<evidence type="ECO:0000250" key="1"/>
<evidence type="ECO:0000255" key="2"/>
<evidence type="ECO:0000256" key="3">
    <source>
        <dbReference type="SAM" id="MobiDB-lite"/>
    </source>
</evidence>
<evidence type="ECO:0000305" key="4"/>
<reference key="1">
    <citation type="journal article" date="1998" name="Biochem. Biophys. Res. Commun.">
        <title>Structure and expression of a novel fibroblast growth factor, FGF-17, preferentially expressed in the embryonic brain.</title>
        <authorList>
            <person name="Hoshikawa M."/>
            <person name="Ohbayashi N."/>
            <person name="Yonamine A."/>
            <person name="Konishi M."/>
            <person name="Ozaki K."/>
            <person name="Fukui S."/>
            <person name="Itoh N."/>
        </authorList>
    </citation>
    <scope>NUCLEOTIDE SEQUENCE [MRNA]</scope>
</reference>
<reference key="2">
    <citation type="journal article" date="2005" name="Science">
        <title>The transcriptional landscape of the mammalian genome.</title>
        <authorList>
            <person name="Carninci P."/>
            <person name="Kasukawa T."/>
            <person name="Katayama S."/>
            <person name="Gough J."/>
            <person name="Frith M.C."/>
            <person name="Maeda N."/>
            <person name="Oyama R."/>
            <person name="Ravasi T."/>
            <person name="Lenhard B."/>
            <person name="Wells C."/>
            <person name="Kodzius R."/>
            <person name="Shimokawa K."/>
            <person name="Bajic V.B."/>
            <person name="Brenner S.E."/>
            <person name="Batalov S."/>
            <person name="Forrest A.R."/>
            <person name="Zavolan M."/>
            <person name="Davis M.J."/>
            <person name="Wilming L.G."/>
            <person name="Aidinis V."/>
            <person name="Allen J.E."/>
            <person name="Ambesi-Impiombato A."/>
            <person name="Apweiler R."/>
            <person name="Aturaliya R.N."/>
            <person name="Bailey T.L."/>
            <person name="Bansal M."/>
            <person name="Baxter L."/>
            <person name="Beisel K.W."/>
            <person name="Bersano T."/>
            <person name="Bono H."/>
            <person name="Chalk A.M."/>
            <person name="Chiu K.P."/>
            <person name="Choudhary V."/>
            <person name="Christoffels A."/>
            <person name="Clutterbuck D.R."/>
            <person name="Crowe M.L."/>
            <person name="Dalla E."/>
            <person name="Dalrymple B.P."/>
            <person name="de Bono B."/>
            <person name="Della Gatta G."/>
            <person name="di Bernardo D."/>
            <person name="Down T."/>
            <person name="Engstrom P."/>
            <person name="Fagiolini M."/>
            <person name="Faulkner G."/>
            <person name="Fletcher C.F."/>
            <person name="Fukushima T."/>
            <person name="Furuno M."/>
            <person name="Futaki S."/>
            <person name="Gariboldi M."/>
            <person name="Georgii-Hemming P."/>
            <person name="Gingeras T.R."/>
            <person name="Gojobori T."/>
            <person name="Green R.E."/>
            <person name="Gustincich S."/>
            <person name="Harbers M."/>
            <person name="Hayashi Y."/>
            <person name="Hensch T.K."/>
            <person name="Hirokawa N."/>
            <person name="Hill D."/>
            <person name="Huminiecki L."/>
            <person name="Iacono M."/>
            <person name="Ikeo K."/>
            <person name="Iwama A."/>
            <person name="Ishikawa T."/>
            <person name="Jakt M."/>
            <person name="Kanapin A."/>
            <person name="Katoh M."/>
            <person name="Kawasawa Y."/>
            <person name="Kelso J."/>
            <person name="Kitamura H."/>
            <person name="Kitano H."/>
            <person name="Kollias G."/>
            <person name="Krishnan S.P."/>
            <person name="Kruger A."/>
            <person name="Kummerfeld S.K."/>
            <person name="Kurochkin I.V."/>
            <person name="Lareau L.F."/>
            <person name="Lazarevic D."/>
            <person name="Lipovich L."/>
            <person name="Liu J."/>
            <person name="Liuni S."/>
            <person name="McWilliam S."/>
            <person name="Madan Babu M."/>
            <person name="Madera M."/>
            <person name="Marchionni L."/>
            <person name="Matsuda H."/>
            <person name="Matsuzawa S."/>
            <person name="Miki H."/>
            <person name="Mignone F."/>
            <person name="Miyake S."/>
            <person name="Morris K."/>
            <person name="Mottagui-Tabar S."/>
            <person name="Mulder N."/>
            <person name="Nakano N."/>
            <person name="Nakauchi H."/>
            <person name="Ng P."/>
            <person name="Nilsson R."/>
            <person name="Nishiguchi S."/>
            <person name="Nishikawa S."/>
            <person name="Nori F."/>
            <person name="Ohara O."/>
            <person name="Okazaki Y."/>
            <person name="Orlando V."/>
            <person name="Pang K.C."/>
            <person name="Pavan W.J."/>
            <person name="Pavesi G."/>
            <person name="Pesole G."/>
            <person name="Petrovsky N."/>
            <person name="Piazza S."/>
            <person name="Reed J."/>
            <person name="Reid J.F."/>
            <person name="Ring B.Z."/>
            <person name="Ringwald M."/>
            <person name="Rost B."/>
            <person name="Ruan Y."/>
            <person name="Salzberg S.L."/>
            <person name="Sandelin A."/>
            <person name="Schneider C."/>
            <person name="Schoenbach C."/>
            <person name="Sekiguchi K."/>
            <person name="Semple C.A."/>
            <person name="Seno S."/>
            <person name="Sessa L."/>
            <person name="Sheng Y."/>
            <person name="Shibata Y."/>
            <person name="Shimada H."/>
            <person name="Shimada K."/>
            <person name="Silva D."/>
            <person name="Sinclair B."/>
            <person name="Sperling S."/>
            <person name="Stupka E."/>
            <person name="Sugiura K."/>
            <person name="Sultana R."/>
            <person name="Takenaka Y."/>
            <person name="Taki K."/>
            <person name="Tammoja K."/>
            <person name="Tan S.L."/>
            <person name="Tang S."/>
            <person name="Taylor M.S."/>
            <person name="Tegner J."/>
            <person name="Teichmann S.A."/>
            <person name="Ueda H.R."/>
            <person name="van Nimwegen E."/>
            <person name="Verardo R."/>
            <person name="Wei C.L."/>
            <person name="Yagi K."/>
            <person name="Yamanishi H."/>
            <person name="Zabarovsky E."/>
            <person name="Zhu S."/>
            <person name="Zimmer A."/>
            <person name="Hide W."/>
            <person name="Bult C."/>
            <person name="Grimmond S.M."/>
            <person name="Teasdale R.D."/>
            <person name="Liu E.T."/>
            <person name="Brusic V."/>
            <person name="Quackenbush J."/>
            <person name="Wahlestedt C."/>
            <person name="Mattick J.S."/>
            <person name="Hume D.A."/>
            <person name="Kai C."/>
            <person name="Sasaki D."/>
            <person name="Tomaru Y."/>
            <person name="Fukuda S."/>
            <person name="Kanamori-Katayama M."/>
            <person name="Suzuki M."/>
            <person name="Aoki J."/>
            <person name="Arakawa T."/>
            <person name="Iida J."/>
            <person name="Imamura K."/>
            <person name="Itoh M."/>
            <person name="Kato T."/>
            <person name="Kawaji H."/>
            <person name="Kawagashira N."/>
            <person name="Kawashima T."/>
            <person name="Kojima M."/>
            <person name="Kondo S."/>
            <person name="Konno H."/>
            <person name="Nakano K."/>
            <person name="Ninomiya N."/>
            <person name="Nishio T."/>
            <person name="Okada M."/>
            <person name="Plessy C."/>
            <person name="Shibata K."/>
            <person name="Shiraki T."/>
            <person name="Suzuki S."/>
            <person name="Tagami M."/>
            <person name="Waki K."/>
            <person name="Watahiki A."/>
            <person name="Okamura-Oho Y."/>
            <person name="Suzuki H."/>
            <person name="Kawai J."/>
            <person name="Hayashizaki Y."/>
        </authorList>
    </citation>
    <scope>NUCLEOTIDE SEQUENCE [LARGE SCALE MRNA]</scope>
    <source>
        <strain>C57BL/6J</strain>
    </source>
</reference>
<name>FGF17_MOUSE</name>
<comment type="function">
    <text>Plays an important role in the regulation of embryonic development and as signaling molecule in the induction and patterning of the embryonic brain. Required for normal brain development.</text>
</comment>
<comment type="subunit">
    <text evidence="1">Interacts with FGFR3 and FGFR4.</text>
</comment>
<comment type="subcellular location">
    <subcellularLocation>
        <location evidence="1">Secreted</location>
    </subcellularLocation>
</comment>
<comment type="similarity">
    <text evidence="4">Belongs to the heparin-binding growth factors family.</text>
</comment>
<feature type="signal peptide" evidence="2">
    <location>
        <begin position="1"/>
        <end position="22"/>
    </location>
</feature>
<feature type="chain" id="PRO_0000008986" description="Fibroblast growth factor 17">
    <location>
        <begin position="23"/>
        <end position="216"/>
    </location>
</feature>
<feature type="region of interest" description="Disordered" evidence="3">
    <location>
        <begin position="195"/>
        <end position="216"/>
    </location>
</feature>
<feature type="compositionally biased region" description="Basic residues" evidence="3">
    <location>
        <begin position="204"/>
        <end position="216"/>
    </location>
</feature>
<feature type="glycosylation site" description="N-linked (GlcNAc...) asparagine" evidence="2">
    <location>
        <position position="137"/>
    </location>
</feature>
<proteinExistence type="evidence at transcript level"/>
<dbReference type="EMBL" id="AB009250">
    <property type="protein sequence ID" value="BAA25430.1"/>
    <property type="molecule type" value="mRNA"/>
</dbReference>
<dbReference type="EMBL" id="AK077555">
    <property type="protein sequence ID" value="BAC36859.1"/>
    <property type="molecule type" value="mRNA"/>
</dbReference>
<dbReference type="CCDS" id="CCDS27260.1"/>
<dbReference type="RefSeq" id="NP_032030.1">
    <property type="nucleotide sequence ID" value="NM_008004.6"/>
</dbReference>
<dbReference type="RefSeq" id="XP_006518614.1">
    <property type="nucleotide sequence ID" value="XM_006518551.3"/>
</dbReference>
<dbReference type="RefSeq" id="XP_011243255.1">
    <property type="nucleotide sequence ID" value="XM_011244953.2"/>
</dbReference>
<dbReference type="RefSeq" id="XP_036014352.1">
    <property type="nucleotide sequence ID" value="XM_036158459.1"/>
</dbReference>
<dbReference type="RefSeq" id="XP_036014353.1">
    <property type="nucleotide sequence ID" value="XM_036158460.1"/>
</dbReference>
<dbReference type="SMR" id="P63075"/>
<dbReference type="BioGRID" id="199645">
    <property type="interactions" value="1"/>
</dbReference>
<dbReference type="FunCoup" id="P63075">
    <property type="interactions" value="895"/>
</dbReference>
<dbReference type="STRING" id="10090.ENSMUSP00000022697"/>
<dbReference type="GlyCosmos" id="P63075">
    <property type="glycosylation" value="1 site, No reported glycans"/>
</dbReference>
<dbReference type="GlyGen" id="P63075">
    <property type="glycosylation" value="1 site"/>
</dbReference>
<dbReference type="PhosphoSitePlus" id="P63075"/>
<dbReference type="PaxDb" id="10090-ENSMUSP00000022697"/>
<dbReference type="Antibodypedia" id="22456">
    <property type="antibodies" value="326 antibodies from 29 providers"/>
</dbReference>
<dbReference type="DNASU" id="14171"/>
<dbReference type="Ensembl" id="ENSMUST00000022697.7">
    <property type="protein sequence ID" value="ENSMUSP00000022697.6"/>
    <property type="gene ID" value="ENSMUSG00000022101.7"/>
</dbReference>
<dbReference type="GeneID" id="14171"/>
<dbReference type="KEGG" id="mmu:14171"/>
<dbReference type="UCSC" id="uc007uos.1">
    <property type="organism name" value="mouse"/>
</dbReference>
<dbReference type="AGR" id="MGI:1202401"/>
<dbReference type="CTD" id="8822"/>
<dbReference type="MGI" id="MGI:1202401">
    <property type="gene designation" value="Fgf17"/>
</dbReference>
<dbReference type="VEuPathDB" id="HostDB:ENSMUSG00000022101"/>
<dbReference type="eggNOG" id="KOG3885">
    <property type="taxonomic scope" value="Eukaryota"/>
</dbReference>
<dbReference type="GeneTree" id="ENSGT00940000161965"/>
<dbReference type="HOGENOM" id="CLU_090682_0_0_1"/>
<dbReference type="InParanoid" id="P63075"/>
<dbReference type="OMA" id="LCCQTQV"/>
<dbReference type="OrthoDB" id="5988014at2759"/>
<dbReference type="PhylomeDB" id="P63075"/>
<dbReference type="TreeFam" id="TF331233"/>
<dbReference type="Reactome" id="R-MMU-109704">
    <property type="pathway name" value="PI3K Cascade"/>
</dbReference>
<dbReference type="Reactome" id="R-MMU-1257604">
    <property type="pathway name" value="PIP3 activates AKT signaling"/>
</dbReference>
<dbReference type="Reactome" id="R-MMU-190322">
    <property type="pathway name" value="FGFR4 ligand binding and activation"/>
</dbReference>
<dbReference type="Reactome" id="R-MMU-190371">
    <property type="pathway name" value="FGFR3b ligand binding and activation"/>
</dbReference>
<dbReference type="Reactome" id="R-MMU-190372">
    <property type="pathway name" value="FGFR3c ligand binding and activation"/>
</dbReference>
<dbReference type="Reactome" id="R-MMU-190373">
    <property type="pathway name" value="FGFR1c ligand binding and activation"/>
</dbReference>
<dbReference type="Reactome" id="R-MMU-190375">
    <property type="pathway name" value="FGFR2c ligand binding and activation"/>
</dbReference>
<dbReference type="Reactome" id="R-MMU-5654219">
    <property type="pathway name" value="Phospholipase C-mediated cascade: FGFR1"/>
</dbReference>
<dbReference type="Reactome" id="R-MMU-5654221">
    <property type="pathway name" value="Phospholipase C-mediated cascade, FGFR2"/>
</dbReference>
<dbReference type="Reactome" id="R-MMU-5654227">
    <property type="pathway name" value="Phospholipase C-mediated cascade, FGFR3"/>
</dbReference>
<dbReference type="Reactome" id="R-MMU-5654228">
    <property type="pathway name" value="Phospholipase C-mediated cascade, FGFR4"/>
</dbReference>
<dbReference type="Reactome" id="R-MMU-5654687">
    <property type="pathway name" value="Downstream signaling of activated FGFR1"/>
</dbReference>
<dbReference type="Reactome" id="R-MMU-5654688">
    <property type="pathway name" value="SHC-mediated cascade:FGFR1"/>
</dbReference>
<dbReference type="Reactome" id="R-MMU-5654689">
    <property type="pathway name" value="PI-3K cascade:FGFR1"/>
</dbReference>
<dbReference type="Reactome" id="R-MMU-5654693">
    <property type="pathway name" value="FRS-mediated FGFR1 signaling"/>
</dbReference>
<dbReference type="Reactome" id="R-MMU-5654695">
    <property type="pathway name" value="PI-3K cascade:FGFR2"/>
</dbReference>
<dbReference type="Reactome" id="R-MMU-5654699">
    <property type="pathway name" value="SHC-mediated cascade:FGFR2"/>
</dbReference>
<dbReference type="Reactome" id="R-MMU-5654700">
    <property type="pathway name" value="FRS-mediated FGFR2 signaling"/>
</dbReference>
<dbReference type="Reactome" id="R-MMU-5654704">
    <property type="pathway name" value="SHC-mediated cascade:FGFR3"/>
</dbReference>
<dbReference type="Reactome" id="R-MMU-5654706">
    <property type="pathway name" value="FRS-mediated FGFR3 signaling"/>
</dbReference>
<dbReference type="Reactome" id="R-MMU-5654710">
    <property type="pathway name" value="PI-3K cascade:FGFR3"/>
</dbReference>
<dbReference type="Reactome" id="R-MMU-5654712">
    <property type="pathway name" value="FRS-mediated FGFR4 signaling"/>
</dbReference>
<dbReference type="Reactome" id="R-MMU-5654719">
    <property type="pathway name" value="SHC-mediated cascade:FGFR4"/>
</dbReference>
<dbReference type="Reactome" id="R-MMU-5654720">
    <property type="pathway name" value="PI-3K cascade:FGFR4"/>
</dbReference>
<dbReference type="Reactome" id="R-MMU-5654726">
    <property type="pathway name" value="Negative regulation of FGFR1 signaling"/>
</dbReference>
<dbReference type="Reactome" id="R-MMU-5654727">
    <property type="pathway name" value="Negative regulation of FGFR2 signaling"/>
</dbReference>
<dbReference type="Reactome" id="R-MMU-5654732">
    <property type="pathway name" value="Negative regulation of FGFR3 signaling"/>
</dbReference>
<dbReference type="Reactome" id="R-MMU-5654733">
    <property type="pathway name" value="Negative regulation of FGFR4 signaling"/>
</dbReference>
<dbReference type="Reactome" id="R-MMU-5658623">
    <property type="pathway name" value="FGFRL1 modulation of FGFR1 signaling"/>
</dbReference>
<dbReference type="Reactome" id="R-MMU-5673001">
    <property type="pathway name" value="RAF/MAP kinase cascade"/>
</dbReference>
<dbReference type="Reactome" id="R-MMU-6811558">
    <property type="pathway name" value="PI5P, PP2A and IER3 Regulate PI3K/AKT Signaling"/>
</dbReference>
<dbReference type="BioGRID-ORCS" id="14171">
    <property type="hits" value="2 hits in 78 CRISPR screens"/>
</dbReference>
<dbReference type="PRO" id="PR:P63075"/>
<dbReference type="Proteomes" id="UP000000589">
    <property type="component" value="Chromosome 14"/>
</dbReference>
<dbReference type="RNAct" id="P63075">
    <property type="molecule type" value="protein"/>
</dbReference>
<dbReference type="Bgee" id="ENSMUSG00000022101">
    <property type="expression patterns" value="Expressed in embryonic post-anal tail and 63 other cell types or tissues"/>
</dbReference>
<dbReference type="ExpressionAtlas" id="P63075">
    <property type="expression patterns" value="baseline and differential"/>
</dbReference>
<dbReference type="GO" id="GO:0005576">
    <property type="term" value="C:extracellular region"/>
    <property type="evidence" value="ECO:0007669"/>
    <property type="project" value="UniProtKB-SubCell"/>
</dbReference>
<dbReference type="GO" id="GO:0008083">
    <property type="term" value="F:growth factor activity"/>
    <property type="evidence" value="ECO:0007669"/>
    <property type="project" value="UniProtKB-KW"/>
</dbReference>
<dbReference type="GO" id="GO:0005105">
    <property type="term" value="F:type 1 fibroblast growth factor receptor binding"/>
    <property type="evidence" value="ECO:0007669"/>
    <property type="project" value="Ensembl"/>
</dbReference>
<dbReference type="GO" id="GO:0005111">
    <property type="term" value="F:type 2 fibroblast growth factor receptor binding"/>
    <property type="evidence" value="ECO:0007669"/>
    <property type="project" value="Ensembl"/>
</dbReference>
<dbReference type="GO" id="GO:0008543">
    <property type="term" value="P:fibroblast growth factor receptor signaling pathway"/>
    <property type="evidence" value="ECO:0000314"/>
    <property type="project" value="MGI"/>
</dbReference>
<dbReference type="GO" id="GO:0008284">
    <property type="term" value="P:positive regulation of cell population proliferation"/>
    <property type="evidence" value="ECO:0000314"/>
    <property type="project" value="MGI"/>
</dbReference>
<dbReference type="CDD" id="cd23323">
    <property type="entry name" value="beta-trefoil_FGF17"/>
    <property type="match status" value="1"/>
</dbReference>
<dbReference type="FunFam" id="2.80.10.50:FF:000007">
    <property type="entry name" value="Fibroblast growth factor"/>
    <property type="match status" value="1"/>
</dbReference>
<dbReference type="Gene3D" id="2.80.10.50">
    <property type="match status" value="1"/>
</dbReference>
<dbReference type="InterPro" id="IPR002209">
    <property type="entry name" value="Fibroblast_GF_fam"/>
</dbReference>
<dbReference type="InterPro" id="IPR008996">
    <property type="entry name" value="IL1/FGF"/>
</dbReference>
<dbReference type="PANTHER" id="PTHR11486">
    <property type="entry name" value="FIBROBLAST GROWTH FACTOR"/>
    <property type="match status" value="1"/>
</dbReference>
<dbReference type="Pfam" id="PF00167">
    <property type="entry name" value="FGF"/>
    <property type="match status" value="1"/>
</dbReference>
<dbReference type="PRINTS" id="PR00262">
    <property type="entry name" value="IL1HBGF"/>
</dbReference>
<dbReference type="SMART" id="SM00442">
    <property type="entry name" value="FGF"/>
    <property type="match status" value="1"/>
</dbReference>
<dbReference type="SUPFAM" id="SSF50353">
    <property type="entry name" value="Cytokine"/>
    <property type="match status" value="1"/>
</dbReference>
<dbReference type="PROSITE" id="PS00247">
    <property type="entry name" value="HBGF_FGF"/>
    <property type="match status" value="1"/>
</dbReference>
<keyword id="KW-0217">Developmental protein</keyword>
<keyword id="KW-0325">Glycoprotein</keyword>
<keyword id="KW-0339">Growth factor</keyword>
<keyword id="KW-1185">Reference proteome</keyword>
<keyword id="KW-0964">Secreted</keyword>
<keyword id="KW-0732">Signal</keyword>
<protein>
    <recommendedName>
        <fullName>Fibroblast growth factor 17</fullName>
        <shortName>FGF-17</shortName>
    </recommendedName>
</protein>
<organism>
    <name type="scientific">Mus musculus</name>
    <name type="common">Mouse</name>
    <dbReference type="NCBI Taxonomy" id="10090"/>
    <lineage>
        <taxon>Eukaryota</taxon>
        <taxon>Metazoa</taxon>
        <taxon>Chordata</taxon>
        <taxon>Craniata</taxon>
        <taxon>Vertebrata</taxon>
        <taxon>Euteleostomi</taxon>
        <taxon>Mammalia</taxon>
        <taxon>Eutheria</taxon>
        <taxon>Euarchontoglires</taxon>
        <taxon>Glires</taxon>
        <taxon>Rodentia</taxon>
        <taxon>Myomorpha</taxon>
        <taxon>Muroidea</taxon>
        <taxon>Muridae</taxon>
        <taxon>Murinae</taxon>
        <taxon>Mus</taxon>
        <taxon>Mus</taxon>
    </lineage>
</organism>
<gene>
    <name type="primary">Fgf17</name>
</gene>
<accession>P63075</accession>
<accession>O70627</accession>
<sequence>MGAARLLPNLTLCLQLLILCCQTQGENHPSPNFNQYVRDQGAMTDQLSRRQIREYQLYSRTSGKHVQVTGRRISATAEDGNKFAKLIVETDTFGSRVRIKGAESEKYICMNKRGKLIGKPSGKSKDCVFTEIVLENNYTAFQNARHEGWFMAFTRQGRPRQASRSRQNQREAHFIKRLYQGQLPFPNHAERQKQFEFVGSAPTRRTKRTRRPQSQT</sequence>